<organism>
    <name type="scientific">Escherichia coli (strain UTI89 / UPEC)</name>
    <dbReference type="NCBI Taxonomy" id="364106"/>
    <lineage>
        <taxon>Bacteria</taxon>
        <taxon>Pseudomonadati</taxon>
        <taxon>Pseudomonadota</taxon>
        <taxon>Gammaproteobacteria</taxon>
        <taxon>Enterobacterales</taxon>
        <taxon>Enterobacteriaceae</taxon>
        <taxon>Escherichia</taxon>
    </lineage>
</organism>
<comment type="catalytic activity">
    <reaction evidence="1">
        <text>D-altronate + NAD(+) = keto-D-tagaturonate + NADH + H(+)</text>
        <dbReference type="Rhea" id="RHEA:17813"/>
        <dbReference type="ChEBI" id="CHEBI:15378"/>
        <dbReference type="ChEBI" id="CHEBI:17360"/>
        <dbReference type="ChEBI" id="CHEBI:17886"/>
        <dbReference type="ChEBI" id="CHEBI:57540"/>
        <dbReference type="ChEBI" id="CHEBI:57945"/>
        <dbReference type="EC" id="1.1.1.58"/>
    </reaction>
</comment>
<comment type="pathway">
    <text evidence="1">Carbohydrate metabolism; pentose and glucuronate interconversion.</text>
</comment>
<comment type="similarity">
    <text evidence="1">Belongs to the mannitol dehydrogenase family. UxaB subfamily.</text>
</comment>
<name>UXAB_ECOUT</name>
<gene>
    <name evidence="1" type="primary">uxaB</name>
    <name type="ordered locus">UTI89_C1740</name>
</gene>
<protein>
    <recommendedName>
        <fullName evidence="1">Altronate oxidoreductase</fullName>
        <ecNumber evidence="1">1.1.1.58</ecNumber>
    </recommendedName>
    <alternativeName>
        <fullName evidence="1">Tagaturonate dehydrogenase</fullName>
    </alternativeName>
    <alternativeName>
        <fullName evidence="1">Tagaturonate reductase</fullName>
    </alternativeName>
</protein>
<accession>Q1RBP6</accession>
<evidence type="ECO:0000255" key="1">
    <source>
        <dbReference type="HAMAP-Rule" id="MF_00670"/>
    </source>
</evidence>
<proteinExistence type="inferred from homology"/>
<reference key="1">
    <citation type="journal article" date="2006" name="Proc. Natl. Acad. Sci. U.S.A.">
        <title>Identification of genes subject to positive selection in uropathogenic strains of Escherichia coli: a comparative genomics approach.</title>
        <authorList>
            <person name="Chen S.L."/>
            <person name="Hung C.-S."/>
            <person name="Xu J."/>
            <person name="Reigstad C.S."/>
            <person name="Magrini V."/>
            <person name="Sabo A."/>
            <person name="Blasiar D."/>
            <person name="Bieri T."/>
            <person name="Meyer R.R."/>
            <person name="Ozersky P."/>
            <person name="Armstrong J.R."/>
            <person name="Fulton R.S."/>
            <person name="Latreille J.P."/>
            <person name="Spieth J."/>
            <person name="Hooton T.M."/>
            <person name="Mardis E.R."/>
            <person name="Hultgren S.J."/>
            <person name="Gordon J.I."/>
        </authorList>
    </citation>
    <scope>NUCLEOTIDE SEQUENCE [LARGE SCALE GENOMIC DNA]</scope>
    <source>
        <strain>UTI89 / UPEC</strain>
    </source>
</reference>
<sequence>MKTLNRRDFPGAQYPERIIQFGEGNFLRAFVDWQIDLLNEHTDLNSGVVVVRPIETSFPPSLSTQDGLYTTIIRGLNEKGEAVSDARLIRSVNREISVYSEYDEFLKLAHNPEMRFVFSNTTEAGISYHAGDKFDDAPAVSYPAKLTRLLFERFSHFNGALDKGWIIIPCELIDYNGDALRELVLRYAQEWALPEAFIQWLDQANSFCSTLVDRIVTGYPRDEVAKLEEELGYHDGFLDTAEHFYLFVIQGPKSLATELRLDKYPLNVLIVDDIKPYKERKVAILNGAHTALVPVAFQAGLDTVGEAMNDAEICAFVEKAIYEEIIPVLDLPRDELESFASAVTGRFRNPYIKHQLLSIALNGMTKFRTRILPQLLAGQKANGTLPARLTFALAALIAFYRGERNGETYPVQDDAHWLERYQQLWSQYRDRVIGTQELVAIVLAEKDHWEQDLTQVPGLVEQVANDLDAILEKGMREAVRPLC</sequence>
<feature type="chain" id="PRO_1000044704" description="Altronate oxidoreductase">
    <location>
        <begin position="1"/>
        <end position="483"/>
    </location>
</feature>
<feature type="binding site" evidence="1">
    <location>
        <begin position="18"/>
        <end position="29"/>
    </location>
    <ligand>
        <name>NAD(+)</name>
        <dbReference type="ChEBI" id="CHEBI:57540"/>
    </ligand>
</feature>
<keyword id="KW-0520">NAD</keyword>
<keyword id="KW-0560">Oxidoreductase</keyword>
<dbReference type="EC" id="1.1.1.58" evidence="1"/>
<dbReference type="EMBL" id="CP000243">
    <property type="protein sequence ID" value="ABE07218.1"/>
    <property type="molecule type" value="Genomic_DNA"/>
</dbReference>
<dbReference type="RefSeq" id="WP_000854637.1">
    <property type="nucleotide sequence ID" value="NZ_CP064825.1"/>
</dbReference>
<dbReference type="SMR" id="Q1RBP6"/>
<dbReference type="KEGG" id="eci:UTI89_C1740"/>
<dbReference type="HOGENOM" id="CLU_027324_1_0_6"/>
<dbReference type="UniPathway" id="UPA00246"/>
<dbReference type="Proteomes" id="UP000001952">
    <property type="component" value="Chromosome"/>
</dbReference>
<dbReference type="GO" id="GO:0005829">
    <property type="term" value="C:cytosol"/>
    <property type="evidence" value="ECO:0007669"/>
    <property type="project" value="TreeGrafter"/>
</dbReference>
<dbReference type="GO" id="GO:0008926">
    <property type="term" value="F:mannitol-1-phosphate 5-dehydrogenase activity"/>
    <property type="evidence" value="ECO:0007669"/>
    <property type="project" value="TreeGrafter"/>
</dbReference>
<dbReference type="GO" id="GO:0009026">
    <property type="term" value="F:tagaturonate reductase activity"/>
    <property type="evidence" value="ECO:0007669"/>
    <property type="project" value="UniProtKB-UniRule"/>
</dbReference>
<dbReference type="GO" id="GO:0019698">
    <property type="term" value="P:D-galacturonate catabolic process"/>
    <property type="evidence" value="ECO:0007669"/>
    <property type="project" value="TreeGrafter"/>
</dbReference>
<dbReference type="GO" id="GO:0019592">
    <property type="term" value="P:mannitol catabolic process"/>
    <property type="evidence" value="ECO:0007669"/>
    <property type="project" value="TreeGrafter"/>
</dbReference>
<dbReference type="FunFam" id="1.10.1040.10:FF:000018">
    <property type="entry name" value="Altronate oxidoreductase"/>
    <property type="match status" value="1"/>
</dbReference>
<dbReference type="FunFam" id="3.40.50.720:FF:000153">
    <property type="entry name" value="Altronate oxidoreductase"/>
    <property type="match status" value="1"/>
</dbReference>
<dbReference type="Gene3D" id="1.10.1040.10">
    <property type="entry name" value="N-(1-d-carboxylethyl)-l-norvaline Dehydrogenase, domain 2"/>
    <property type="match status" value="1"/>
</dbReference>
<dbReference type="Gene3D" id="3.40.50.720">
    <property type="entry name" value="NAD(P)-binding Rossmann-like Domain"/>
    <property type="match status" value="1"/>
</dbReference>
<dbReference type="HAMAP" id="MF_00670">
    <property type="entry name" value="Altron_oxidoreduct"/>
    <property type="match status" value="1"/>
</dbReference>
<dbReference type="InterPro" id="IPR008927">
    <property type="entry name" value="6-PGluconate_DH-like_C_sf"/>
</dbReference>
<dbReference type="InterPro" id="IPR013328">
    <property type="entry name" value="6PGD_dom2"/>
</dbReference>
<dbReference type="InterPro" id="IPR023668">
    <property type="entry name" value="Altronate_OxRdtase"/>
</dbReference>
<dbReference type="InterPro" id="IPR013118">
    <property type="entry name" value="Mannitol_DH_C"/>
</dbReference>
<dbReference type="InterPro" id="IPR013131">
    <property type="entry name" value="Mannitol_DH_N"/>
</dbReference>
<dbReference type="InterPro" id="IPR036291">
    <property type="entry name" value="NAD(P)-bd_dom_sf"/>
</dbReference>
<dbReference type="NCBIfam" id="NF002969">
    <property type="entry name" value="PRK03643.1"/>
    <property type="match status" value="1"/>
</dbReference>
<dbReference type="PANTHER" id="PTHR30524:SF0">
    <property type="entry name" value="ALTRONATE OXIDOREDUCTASE-RELATED"/>
    <property type="match status" value="1"/>
</dbReference>
<dbReference type="PANTHER" id="PTHR30524">
    <property type="entry name" value="MANNITOL-1-PHOSPHATE 5-DEHYDROGENASE"/>
    <property type="match status" value="1"/>
</dbReference>
<dbReference type="Pfam" id="PF01232">
    <property type="entry name" value="Mannitol_dh"/>
    <property type="match status" value="1"/>
</dbReference>
<dbReference type="Pfam" id="PF08125">
    <property type="entry name" value="Mannitol_dh_C"/>
    <property type="match status" value="1"/>
</dbReference>
<dbReference type="SUPFAM" id="SSF48179">
    <property type="entry name" value="6-phosphogluconate dehydrogenase C-terminal domain-like"/>
    <property type="match status" value="1"/>
</dbReference>
<dbReference type="SUPFAM" id="SSF51735">
    <property type="entry name" value="NAD(P)-binding Rossmann-fold domains"/>
    <property type="match status" value="1"/>
</dbReference>